<proteinExistence type="evidence at transcript level"/>
<comment type="function">
    <text>Hydrolyzes glycerol-phospholipids at the terminal phosphodiesteric bond. Plays an important role in various cellular processes, including phytohormone action, vesicular trafficking, secretion, cytoskeletal arrangement, meiosis, tumor promotion, pathogenesis, membrane deterioration and senescence.</text>
</comment>
<comment type="catalytic activity">
    <reaction>
        <text>a 1,2-diacyl-sn-glycero-3-phosphocholine + H2O = a 1,2-diacyl-sn-glycero-3-phosphate + choline + H(+)</text>
        <dbReference type="Rhea" id="RHEA:14445"/>
        <dbReference type="ChEBI" id="CHEBI:15354"/>
        <dbReference type="ChEBI" id="CHEBI:15377"/>
        <dbReference type="ChEBI" id="CHEBI:15378"/>
        <dbReference type="ChEBI" id="CHEBI:57643"/>
        <dbReference type="ChEBI" id="CHEBI:58608"/>
        <dbReference type="EC" id="3.1.4.4"/>
    </reaction>
</comment>
<comment type="cofactor">
    <cofactor>
        <name>Ca(2+)</name>
        <dbReference type="ChEBI" id="CHEBI:29108"/>
    </cofactor>
    <text>Ca(2+) requirement for activity depends on pH. Active either under acidic conditions with micromolar levels of calcium (PIP2-dependent) or at neutral pH with millimolar levels of calcium (PIP2-independent).</text>
</comment>
<comment type="subcellular location">
    <subcellularLocation>
        <location evidence="1">Cytoplasm</location>
    </subcellularLocation>
    <subcellularLocation>
        <location evidence="1">Membrane</location>
        <topology evidence="1">Peripheral membrane protein</topology>
    </subcellularLocation>
</comment>
<comment type="domain">
    <text>C2 domain is a calcium-binding fold, and the binding promotes the protein association with membranes. A lower affinity toward calcium can be anticipated for PLD alpha due to the absence of two potential calcium ligands.</text>
</comment>
<comment type="miscellaneous">
    <text>The propeptide appears to play a key role in the proper folding and activation of the enzyme.</text>
</comment>
<comment type="similarity">
    <text evidence="5">Belongs to the phospholipase D family. C2-PLD subfamily.</text>
</comment>
<gene>
    <name type="primary">PLD1</name>
</gene>
<accession>O82549</accession>
<feature type="propeptide" id="PRO_0000024649" evidence="1">
    <location>
        <begin position="1"/>
        <end position="36"/>
    </location>
</feature>
<feature type="chain" id="PRO_0000024650" description="Phospholipase D alpha 1">
    <location>
        <begin position="37"/>
        <end position="810"/>
    </location>
</feature>
<feature type="domain" description="C2" evidence="3">
    <location>
        <begin position="1"/>
        <end position="126"/>
    </location>
</feature>
<feature type="domain" description="PLD phosphodiesterase 1" evidence="4">
    <location>
        <begin position="327"/>
        <end position="366"/>
    </location>
</feature>
<feature type="domain" description="PLD phosphodiesterase 2" evidence="4">
    <location>
        <begin position="656"/>
        <end position="683"/>
    </location>
</feature>
<feature type="active site" evidence="4">
    <location>
        <position position="332"/>
    </location>
</feature>
<feature type="active site" evidence="4">
    <location>
        <position position="334"/>
    </location>
</feature>
<feature type="active site" evidence="4">
    <location>
        <position position="339"/>
    </location>
</feature>
<feature type="active site" evidence="4">
    <location>
        <position position="661"/>
    </location>
</feature>
<feature type="active site" evidence="4">
    <location>
        <position position="663"/>
    </location>
</feature>
<feature type="active site" evidence="4">
    <location>
        <position position="668"/>
    </location>
</feature>
<feature type="binding site" evidence="2">
    <location>
        <position position="187"/>
    </location>
    <ligand>
        <name>Ca(2+)</name>
        <dbReference type="ChEBI" id="CHEBI:29108"/>
    </ligand>
</feature>
<feature type="binding site" evidence="2">
    <location>
        <position position="332"/>
    </location>
    <ligand>
        <name>a 1,2-diacyl-sn-glycero-3-phosphate</name>
        <dbReference type="ChEBI" id="CHEBI:58608"/>
    </ligand>
</feature>
<feature type="binding site" evidence="2">
    <location>
        <position position="372"/>
    </location>
    <ligand>
        <name>Ca(2+)</name>
        <dbReference type="ChEBI" id="CHEBI:29108"/>
    </ligand>
</feature>
<feature type="binding site" evidence="2">
    <location>
        <position position="406"/>
    </location>
    <ligand>
        <name>Ca(2+)</name>
        <dbReference type="ChEBI" id="CHEBI:29108"/>
    </ligand>
</feature>
<feature type="binding site" evidence="2">
    <location>
        <position position="522"/>
    </location>
    <ligand>
        <name>a 1,2-diacyl-sn-glycero-3-phosphate</name>
        <dbReference type="ChEBI" id="CHEBI:58608"/>
    </ligand>
</feature>
<feature type="binding site" evidence="2">
    <location>
        <position position="661"/>
    </location>
    <ligand>
        <name>a 1,2-diacyl-sn-glycero-3-phosphate</name>
        <dbReference type="ChEBI" id="CHEBI:58608"/>
    </ligand>
</feature>
<feature type="binding site" evidence="2">
    <location>
        <position position="722"/>
    </location>
    <ligand>
        <name>Ca(2+)</name>
        <dbReference type="ChEBI" id="CHEBI:29108"/>
    </ligand>
</feature>
<evidence type="ECO:0000250" key="1"/>
<evidence type="ECO:0000250" key="2">
    <source>
        <dbReference type="UniProtKB" id="Q38882"/>
    </source>
</evidence>
<evidence type="ECO:0000255" key="3">
    <source>
        <dbReference type="PROSITE-ProRule" id="PRU00041"/>
    </source>
</evidence>
<evidence type="ECO:0000255" key="4">
    <source>
        <dbReference type="PROSITE-ProRule" id="PRU00153"/>
    </source>
</evidence>
<evidence type="ECO:0000305" key="5"/>
<name>PLDA1_BRAOC</name>
<protein>
    <recommendedName>
        <fullName>Phospholipase D alpha 1</fullName>
        <shortName>PLD 1</shortName>
        <ecNumber>3.1.4.4</ecNumber>
    </recommendedName>
    <alternativeName>
        <fullName>Choline phosphatase 1</fullName>
    </alternativeName>
    <alternativeName>
        <fullName>Phosphatidylcholine-hydrolyzing phospholipase D 1</fullName>
    </alternativeName>
</protein>
<keyword id="KW-0106">Calcium</keyword>
<keyword id="KW-0963">Cytoplasm</keyword>
<keyword id="KW-0378">Hydrolase</keyword>
<keyword id="KW-0442">Lipid degradation</keyword>
<keyword id="KW-0443">Lipid metabolism</keyword>
<keyword id="KW-0472">Membrane</keyword>
<keyword id="KW-0479">Metal-binding</keyword>
<keyword id="KW-0677">Repeat</keyword>
<organism>
    <name type="scientific">Brassica oleracea var. capitata</name>
    <name type="common">Cabbage</name>
    <dbReference type="NCBI Taxonomy" id="3716"/>
    <lineage>
        <taxon>Eukaryota</taxon>
        <taxon>Viridiplantae</taxon>
        <taxon>Streptophyta</taxon>
        <taxon>Embryophyta</taxon>
        <taxon>Tracheophyta</taxon>
        <taxon>Spermatophyta</taxon>
        <taxon>Magnoliopsida</taxon>
        <taxon>eudicotyledons</taxon>
        <taxon>Gunneridae</taxon>
        <taxon>Pentapetalae</taxon>
        <taxon>rosids</taxon>
        <taxon>malvids</taxon>
        <taxon>Brassicales</taxon>
        <taxon>Brassicaceae</taxon>
        <taxon>Brassiceae</taxon>
        <taxon>Brassica</taxon>
    </lineage>
</organism>
<reference key="1">
    <citation type="online journal article" date="1998" name="Plant Gene Register">
        <title>Identification of two isoenzymes of phospholipase D from cabbage (Brassica oleracea var. capitata).</title>
        <authorList>
            <person name="Pannenberg I."/>
            <person name="Mansfeld J."/>
            <person name="Ulbrich-Hofmann R."/>
        </authorList>
        <locator>PGR98-188</locator>
    </citation>
    <scope>NUCLEOTIDE SEQUENCE [GENOMIC DNA / MRNA]</scope>
</reference>
<sequence>MAQHLLHGTLHATIYEVDDLHTGGLRSGFFGKILANVEETIGVGKGETQLYATIDLQRARVGRTRKIKDEAKNPKWYESFHIYCAHLASDIIFTVKDDNPIGATLIGRAYVPVDQVIHGEEVDQWVEILDNDRNPIHGGSKIHVKLQYFGVEADRNWNQGIKSAKFPGVPYTFFSQRQGCKVSLYQDAHIPDNFVPRIPLAGGKNYEPQRCWEDIFDAISNAQHMIYITGWSVYTEIALVRDSRRPKPGGDVTVGELLKKKASEGVRVLLLVWDDRTSVDVLKKDGLMATHDEETENFFRGSDVHCILCPRNPDDGGSIVQNLQVSAMFTHHQKIVVVDSEMPSRGGSQMRRIVSFVGGIDLCDGRYDTPFHSLFRTLDTVHHDDFHQPNFTGAAITKGGPREPWHDIHSRLEGPIAWDVLYNFEQRWSKQGGKDILVKLRELSDIIITPSPVMFQEDHDVWNVQLFRSIDGGAAAGFPESPEAAAEAGLVSGKDNIIDRSIQDAYIHAIRRAKDFIYIENQYFLGSSFAWAADGITPEDINALHLIPKELSLKIVSKIEKGEKFRVYVVVPMWPEGLPESASVQAILDWQRRTMQMMYKDIVQALRAQGLEEDPRNYLTFFCLGNREVKKEGEYEPAERPDADSSYMKAQEARRFMIYVHTKMMIVDDEYIIIGSANINQRSMDGARDSEIAMGGYQPHHLSHRQPARGQIHGFRMSLWYEHLGMLDETFLDPSSVECIEKVNRISDKYWDLYSSESLEHDLPGHLLRYPVDVDGEGDVTEFPGFEFFPDTKARILGTKSDYLPPILTT</sequence>
<dbReference type="EC" id="3.1.4.4"/>
<dbReference type="EMBL" id="AF090445">
    <property type="protein sequence ID" value="AAC78487.1"/>
    <property type="molecule type" value="mRNA"/>
</dbReference>
<dbReference type="EMBL" id="AF113918">
    <property type="protein sequence ID" value="AAD17208.1"/>
    <property type="molecule type" value="Genomic_DNA"/>
</dbReference>
<dbReference type="SMR" id="O82549"/>
<dbReference type="BRENDA" id="3.1.4.4">
    <property type="organism ID" value="947"/>
</dbReference>
<dbReference type="GO" id="GO:0005737">
    <property type="term" value="C:cytoplasm"/>
    <property type="evidence" value="ECO:0007669"/>
    <property type="project" value="UniProtKB-SubCell"/>
</dbReference>
<dbReference type="GO" id="GO:0005886">
    <property type="term" value="C:plasma membrane"/>
    <property type="evidence" value="ECO:0007669"/>
    <property type="project" value="TreeGrafter"/>
</dbReference>
<dbReference type="GO" id="GO:0005509">
    <property type="term" value="F:calcium ion binding"/>
    <property type="evidence" value="ECO:0007669"/>
    <property type="project" value="InterPro"/>
</dbReference>
<dbReference type="GO" id="GO:0004630">
    <property type="term" value="F:phospholipase D activity"/>
    <property type="evidence" value="ECO:0007669"/>
    <property type="project" value="UniProtKB-EC"/>
</dbReference>
<dbReference type="GO" id="GO:0046470">
    <property type="term" value="P:phosphatidylcholine metabolic process"/>
    <property type="evidence" value="ECO:0007669"/>
    <property type="project" value="InterPro"/>
</dbReference>
<dbReference type="GO" id="GO:0009395">
    <property type="term" value="P:phospholipid catabolic process"/>
    <property type="evidence" value="ECO:0007669"/>
    <property type="project" value="TreeGrafter"/>
</dbReference>
<dbReference type="CDD" id="cd04015">
    <property type="entry name" value="C2_plant_PLD"/>
    <property type="match status" value="1"/>
</dbReference>
<dbReference type="CDD" id="cd09199">
    <property type="entry name" value="PLDc_pPLDalpha_2"/>
    <property type="match status" value="1"/>
</dbReference>
<dbReference type="FunFam" id="3.30.870.10:FF:000027">
    <property type="entry name" value="Phospholipase D"/>
    <property type="match status" value="1"/>
</dbReference>
<dbReference type="FunFam" id="2.60.40.150:FF:000266">
    <property type="entry name" value="Phospholipase D alpha 1"/>
    <property type="match status" value="1"/>
</dbReference>
<dbReference type="FunFam" id="3.30.870.10:FF:000025">
    <property type="entry name" value="Phospholipase D delta"/>
    <property type="match status" value="1"/>
</dbReference>
<dbReference type="Gene3D" id="2.60.40.150">
    <property type="entry name" value="C2 domain"/>
    <property type="match status" value="1"/>
</dbReference>
<dbReference type="Gene3D" id="3.30.870.10">
    <property type="entry name" value="Endonuclease Chain A"/>
    <property type="match status" value="2"/>
</dbReference>
<dbReference type="InterPro" id="IPR000008">
    <property type="entry name" value="C2_dom"/>
</dbReference>
<dbReference type="InterPro" id="IPR035892">
    <property type="entry name" value="C2_domain_sf"/>
</dbReference>
<dbReference type="InterPro" id="IPR001736">
    <property type="entry name" value="PLipase_D/transphosphatidylase"/>
</dbReference>
<dbReference type="InterPro" id="IPR024632">
    <property type="entry name" value="PLipase_D_C"/>
</dbReference>
<dbReference type="InterPro" id="IPR015679">
    <property type="entry name" value="PLipase_D_fam"/>
</dbReference>
<dbReference type="InterPro" id="IPR011402">
    <property type="entry name" value="PLipase_D_pln"/>
</dbReference>
<dbReference type="PANTHER" id="PTHR18896">
    <property type="entry name" value="PHOSPHOLIPASE D"/>
    <property type="match status" value="1"/>
</dbReference>
<dbReference type="PANTHER" id="PTHR18896:SF115">
    <property type="entry name" value="PHOSPHOLIPASE D ALPHA 1"/>
    <property type="match status" value="1"/>
</dbReference>
<dbReference type="Pfam" id="PF00168">
    <property type="entry name" value="C2"/>
    <property type="match status" value="1"/>
</dbReference>
<dbReference type="Pfam" id="PF12357">
    <property type="entry name" value="PLD_C"/>
    <property type="match status" value="1"/>
</dbReference>
<dbReference type="Pfam" id="PF00614">
    <property type="entry name" value="PLDc"/>
    <property type="match status" value="2"/>
</dbReference>
<dbReference type="PIRSF" id="PIRSF036470">
    <property type="entry name" value="PLD_plant"/>
    <property type="match status" value="1"/>
</dbReference>
<dbReference type="SMART" id="SM00239">
    <property type="entry name" value="C2"/>
    <property type="match status" value="1"/>
</dbReference>
<dbReference type="SMART" id="SM00155">
    <property type="entry name" value="PLDc"/>
    <property type="match status" value="2"/>
</dbReference>
<dbReference type="SUPFAM" id="SSF49562">
    <property type="entry name" value="C2 domain (Calcium/lipid-binding domain, CaLB)"/>
    <property type="match status" value="1"/>
</dbReference>
<dbReference type="SUPFAM" id="SSF56024">
    <property type="entry name" value="Phospholipase D/nuclease"/>
    <property type="match status" value="2"/>
</dbReference>
<dbReference type="PROSITE" id="PS50004">
    <property type="entry name" value="C2"/>
    <property type="match status" value="1"/>
</dbReference>
<dbReference type="PROSITE" id="PS50035">
    <property type="entry name" value="PLD"/>
    <property type="match status" value="2"/>
</dbReference>